<proteinExistence type="evidence at protein level"/>
<accession>Q0DJS1</accession>
<accession>A0A077KAU4</accession>
<accession>A0A0P0WJP4</accession>
<accession>B7F5Y4</accession>
<accession>Q6ATH2</accession>
<comment type="function">
    <text evidence="8">Component of TORC1 complex, which is an essential cell growth regulator that controls plant development. Acts through the phosphorylation of downstream effectors that are recruited by the binding partner RAPTOR. Acts by activating transcription, protein synthesis and ribosome biogenesis, and inhibiting mRNA degradation and autophagy.</text>
</comment>
<comment type="catalytic activity">
    <reaction evidence="9">
        <text>L-seryl-[protein] + ATP = O-phospho-L-seryl-[protein] + ADP + H(+)</text>
        <dbReference type="Rhea" id="RHEA:17989"/>
        <dbReference type="Rhea" id="RHEA-COMP:9863"/>
        <dbReference type="Rhea" id="RHEA-COMP:11604"/>
        <dbReference type="ChEBI" id="CHEBI:15378"/>
        <dbReference type="ChEBI" id="CHEBI:29999"/>
        <dbReference type="ChEBI" id="CHEBI:30616"/>
        <dbReference type="ChEBI" id="CHEBI:83421"/>
        <dbReference type="ChEBI" id="CHEBI:456216"/>
        <dbReference type="EC" id="2.7.11.1"/>
    </reaction>
</comment>
<comment type="catalytic activity">
    <reaction evidence="9">
        <text>L-threonyl-[protein] + ATP = O-phospho-L-threonyl-[protein] + ADP + H(+)</text>
        <dbReference type="Rhea" id="RHEA:46608"/>
        <dbReference type="Rhea" id="RHEA-COMP:11060"/>
        <dbReference type="Rhea" id="RHEA-COMP:11605"/>
        <dbReference type="ChEBI" id="CHEBI:15378"/>
        <dbReference type="ChEBI" id="CHEBI:30013"/>
        <dbReference type="ChEBI" id="CHEBI:30616"/>
        <dbReference type="ChEBI" id="CHEBI:61977"/>
        <dbReference type="ChEBI" id="CHEBI:456216"/>
        <dbReference type="EC" id="2.7.11.1"/>
    </reaction>
</comment>
<comment type="activity regulation">
    <text evidence="5">Insensitive to inhibition by rapamycin.</text>
</comment>
<comment type="subunit">
    <text evidence="8">The target of rapamycin complex 1 (TORC1) is composed of at least RAPTOR, LST8 and TOR.</text>
</comment>
<comment type="similarity">
    <text evidence="7">Belongs to the PI3/PI4-kinase family.</text>
</comment>
<comment type="sequence caution" evidence="7">
    <conflict type="erroneous gene model prediction">
        <sequence resource="EMBL-CDS" id="AAT93990"/>
    </conflict>
</comment>
<comment type="sequence caution" evidence="7">
    <conflict type="erroneous gene model prediction">
        <sequence resource="EMBL-CDS" id="BAF16902"/>
    </conflict>
</comment>
<comment type="sequence caution" evidence="7">
    <conflict type="erroneous initiation">
        <sequence resource="EMBL-CDS" id="BAH00032"/>
    </conflict>
    <text>Truncated N-terminus.</text>
</comment>
<comment type="sequence caution" evidence="7">
    <conflict type="erroneous gene model prediction">
        <sequence resource="EMBL-CDS" id="BAS92935"/>
    </conflict>
</comment>
<evidence type="ECO:0000255" key="1">
    <source>
        <dbReference type="PROSITE-ProRule" id="PRU00269"/>
    </source>
</evidence>
<evidence type="ECO:0000255" key="2">
    <source>
        <dbReference type="PROSITE-ProRule" id="PRU00534"/>
    </source>
</evidence>
<evidence type="ECO:0000255" key="3">
    <source>
        <dbReference type="PROSITE-ProRule" id="PRU00535"/>
    </source>
</evidence>
<evidence type="ECO:0000256" key="4">
    <source>
        <dbReference type="SAM" id="MobiDB-lite"/>
    </source>
</evidence>
<evidence type="ECO:0000269" key="5">
    <source>
    </source>
</evidence>
<evidence type="ECO:0000303" key="6">
    <source>
    </source>
</evidence>
<evidence type="ECO:0000305" key="7"/>
<evidence type="ECO:0000305" key="8">
    <source>
    </source>
</evidence>
<evidence type="ECO:0000305" key="9">
    <source>
    </source>
</evidence>
<evidence type="ECO:0000312" key="10">
    <source>
        <dbReference type="EMBL" id="AAT93990.1"/>
    </source>
</evidence>
<evidence type="ECO:0000312" key="11">
    <source>
        <dbReference type="EMBL" id="BAS92935.1"/>
    </source>
</evidence>
<gene>
    <name evidence="6" type="primary">TOR</name>
    <name evidence="11" type="ordered locus">Os05g0235300</name>
    <name evidence="7" type="ordered locus">LOC_Os05g14550</name>
    <name evidence="10" type="ORF">OSJNBa0093E24.9</name>
</gene>
<keyword id="KW-0067">ATP-binding</keyword>
<keyword id="KW-0217">Developmental protein</keyword>
<keyword id="KW-0341">Growth regulation</keyword>
<keyword id="KW-0418">Kinase</keyword>
<keyword id="KW-0547">Nucleotide-binding</keyword>
<keyword id="KW-1185">Reference proteome</keyword>
<keyword id="KW-0677">Repeat</keyword>
<keyword id="KW-0723">Serine/threonine-protein kinase</keyword>
<keyword id="KW-0808">Transferase</keyword>
<protein>
    <recommendedName>
        <fullName evidence="7">Serine/threonine-protein kinase TOR</fullName>
        <ecNumber evidence="9">2.7.11.1</ecNumber>
    </recommendedName>
    <alternativeName>
        <fullName evidence="6">Protein TARGET OF RAPAMYCIN</fullName>
        <shortName evidence="6">OsTOR</shortName>
    </alternativeName>
</protein>
<name>TOR_ORYSJ</name>
<feature type="chain" id="PRO_0000409331" description="Serine/threonine-protein kinase TOR">
    <location>
        <begin position="1"/>
        <end position="2465"/>
    </location>
</feature>
<feature type="repeat" description="HEAT 1">
    <location>
        <begin position="184"/>
        <end position="221"/>
    </location>
</feature>
<feature type="repeat" description="HEAT 2">
    <location>
        <begin position="271"/>
        <end position="308"/>
    </location>
</feature>
<feature type="repeat" description="HEAT 3">
    <location>
        <begin position="348"/>
        <end position="389"/>
    </location>
</feature>
<feature type="repeat" description="HEAT 4">
    <location>
        <begin position="549"/>
        <end position="587"/>
    </location>
</feature>
<feature type="repeat" description="HEAT 5">
    <location>
        <begin position="588"/>
        <end position="625"/>
    </location>
</feature>
<feature type="repeat" description="HEAT 6">
    <location>
        <begin position="717"/>
        <end position="755"/>
    </location>
</feature>
<feature type="repeat" description="HEAT 7">
    <location>
        <begin position="761"/>
        <end position="799"/>
    </location>
</feature>
<feature type="repeat" description="HEAT 8">
    <location>
        <begin position="888"/>
        <end position="926"/>
    </location>
</feature>
<feature type="repeat" description="HEAT 9">
    <location>
        <begin position="981"/>
        <end position="1018"/>
    </location>
</feature>
<feature type="repeat" description="HEAT 10">
    <location>
        <begin position="1022"/>
        <end position="1059"/>
    </location>
</feature>
<feature type="repeat" description="HEAT 11">
    <location>
        <begin position="1061"/>
        <end position="1098"/>
    </location>
</feature>
<feature type="domain" description="FAT" evidence="2">
    <location>
        <begin position="1297"/>
        <end position="1877"/>
    </location>
</feature>
<feature type="domain" description="PI3K/PI4K catalytic" evidence="1">
    <location>
        <begin position="2051"/>
        <end position="2369"/>
    </location>
</feature>
<feature type="domain" description="FATC" evidence="2 3">
    <location>
        <begin position="2433"/>
        <end position="2465"/>
    </location>
</feature>
<feature type="region of interest" description="Disordered" evidence="4">
    <location>
        <begin position="1158"/>
        <end position="1191"/>
    </location>
</feature>
<feature type="region of interest" description="G-loop" evidence="1">
    <location>
        <begin position="2057"/>
        <end position="2063"/>
    </location>
</feature>
<feature type="region of interest" description="Catalytic loop" evidence="1">
    <location>
        <begin position="2230"/>
        <end position="2238"/>
    </location>
</feature>
<feature type="region of interest" description="Activation loop" evidence="1">
    <location>
        <begin position="2250"/>
        <end position="2275"/>
    </location>
</feature>
<feature type="region of interest" description="Disordered" evidence="4">
    <location>
        <begin position="2401"/>
        <end position="2431"/>
    </location>
</feature>
<feature type="compositionally biased region" description="Low complexity" evidence="4">
    <location>
        <begin position="2404"/>
        <end position="2415"/>
    </location>
</feature>
<feature type="sequence conflict" description="In Ref. 1; BAP28447." evidence="7" ref="1">
    <original>G</original>
    <variation>L</variation>
    <location>
        <position position="153"/>
    </location>
</feature>
<feature type="sequence conflict" description="In Ref. 1; BAP28447." evidence="7" ref="1">
    <original>RDRFVTNYLK</original>
    <variation>KDRHIKSYSQ</variation>
    <location>
        <begin position="307"/>
        <end position="316"/>
    </location>
</feature>
<feature type="sequence conflict" description="In Ref. 1; BAP28447." evidence="7" ref="1">
    <original>SIPS</original>
    <variation>RYYF</variation>
    <location>
        <begin position="422"/>
        <end position="425"/>
    </location>
</feature>
<feature type="sequence conflict" description="In Ref. 1; BAP28447." evidence="7" ref="1">
    <original>DI</original>
    <variation>EL</variation>
    <location>
        <begin position="592"/>
        <end position="593"/>
    </location>
</feature>
<reference key="1">
    <citation type="journal article" date="2015" name="Mol. Genet. Genomics">
        <title>Evolutionary conservation of TORC1 components, TOR, Raptor, and LST8, between rice and yeast.</title>
        <authorList>
            <person name="Maegawa K."/>
            <person name="Takii R."/>
            <person name="Ushimaru T."/>
            <person name="Kozaki A."/>
        </authorList>
    </citation>
    <scope>NUCLEOTIDE SEQUENCE [MRNA]</scope>
    <scope>FUNCTION</scope>
    <scope>SUBUNIT</scope>
</reference>
<reference key="2">
    <citation type="journal article" date="2005" name="Mol. Genet. Genomics">
        <title>A fine physical map of the rice chromosome 5.</title>
        <authorList>
            <person name="Cheng C.-H."/>
            <person name="Chung M.C."/>
            <person name="Liu S.-M."/>
            <person name="Chen S.-K."/>
            <person name="Kao F.Y."/>
            <person name="Lin S.-J."/>
            <person name="Hsiao S.-H."/>
            <person name="Tseng I.C."/>
            <person name="Hsing Y.-I.C."/>
            <person name="Wu H.-P."/>
            <person name="Chen C.-S."/>
            <person name="Shaw J.-F."/>
            <person name="Wu J."/>
            <person name="Matsumoto T."/>
            <person name="Sasaki T."/>
            <person name="Chen H.-C."/>
            <person name="Chow T.-Y."/>
        </authorList>
    </citation>
    <scope>NUCLEOTIDE SEQUENCE [LARGE SCALE GENOMIC DNA]</scope>
    <source>
        <strain>cv. Nipponbare</strain>
    </source>
</reference>
<reference key="3">
    <citation type="journal article" date="2005" name="Nature">
        <title>The map-based sequence of the rice genome.</title>
        <authorList>
            <consortium name="International rice genome sequencing project (IRGSP)"/>
        </authorList>
    </citation>
    <scope>NUCLEOTIDE SEQUENCE [LARGE SCALE GENOMIC DNA]</scope>
    <source>
        <strain>cv. Nipponbare</strain>
    </source>
</reference>
<reference key="4">
    <citation type="journal article" date="2008" name="Nucleic Acids Res.">
        <title>The rice annotation project database (RAP-DB): 2008 update.</title>
        <authorList>
            <consortium name="The rice annotation project (RAP)"/>
        </authorList>
    </citation>
    <scope>GENOME REANNOTATION</scope>
    <source>
        <strain>cv. Nipponbare</strain>
    </source>
</reference>
<reference key="5">
    <citation type="journal article" date="2013" name="Rice">
        <title>Improvement of the Oryza sativa Nipponbare reference genome using next generation sequence and optical map data.</title>
        <authorList>
            <person name="Kawahara Y."/>
            <person name="de la Bastide M."/>
            <person name="Hamilton J.P."/>
            <person name="Kanamori H."/>
            <person name="McCombie W.R."/>
            <person name="Ouyang S."/>
            <person name="Schwartz D.C."/>
            <person name="Tanaka T."/>
            <person name="Wu J."/>
            <person name="Zhou S."/>
            <person name="Childs K.L."/>
            <person name="Davidson R.M."/>
            <person name="Lin H."/>
            <person name="Quesada-Ocampo L."/>
            <person name="Vaillancourt B."/>
            <person name="Sakai H."/>
            <person name="Lee S.S."/>
            <person name="Kim J."/>
            <person name="Numa H."/>
            <person name="Itoh T."/>
            <person name="Buell C.R."/>
            <person name="Matsumoto T."/>
        </authorList>
    </citation>
    <scope>GENOME REANNOTATION</scope>
    <source>
        <strain>cv. Nipponbare</strain>
    </source>
</reference>
<reference key="6">
    <citation type="journal article" date="2003" name="Science">
        <title>Collection, mapping, and annotation of over 28,000 cDNA clones from japonica rice.</title>
        <authorList>
            <consortium name="The rice full-length cDNA consortium"/>
        </authorList>
    </citation>
    <scope>NUCLEOTIDE SEQUENCE [LARGE SCALE MRNA] OF 1039-2465</scope>
    <source>
        <strain>cv. Nipponbare</strain>
    </source>
</reference>
<reference key="7">
    <citation type="journal article" date="2017" name="Sci. Rep.">
        <title>Ectopic expression of Arabidopsis Target of Rapamycin (AtTOR) improves water-use efficiency and yield potential in rice.</title>
        <authorList>
            <person name="Bakshi A."/>
            <person name="Moin M."/>
            <person name="Kumar M.U."/>
            <person name="Reddy A.B."/>
            <person name="Ren M."/>
            <person name="Datla R."/>
            <person name="Siddiq E.A."/>
            <person name="Kirti P.B."/>
        </authorList>
    </citation>
    <scope>CATALYTIC ACTIVITY</scope>
    <scope>ACTIVITY REGULATION</scope>
</reference>
<sequence length="2465" mass="276787">MKPSPHFPEIGKKPKDLIAKEHGFNIAAYISSGADVIAAALRKHVEEEARDLSGEAFLRFMEQLYEQICSLLQSNDVAENLLALRAIDALIDMPFGEGASKVSKFANFLRTVFEVKRDPEVLVPASAVLGHLAKAGGAMTADEVERQIKTALGWLGGDRVEYRRFASVLILKEMAENASTVFNVHVPEFVDAIWVALRDPKQAVRERAVEALRACLHVIEKRETRWRVQWYYRMCEAAQVGLGKNASVHSIHGSLLAVGELLRNTGEFMMSRYREVADIVLNYLRHRDQLVRRSITSLLPRIAHFLRDRFVTNYLKICMDHILFVLRTPDERASGFVALGEMAGALGAELVPYLPLITSHLHDAIAPRRGRPSLEAISCVGSFAKAMGPAMEPHIRGGLLDAMFSAGLSDKLVEALESISTSIPSLLPTIQERLLDCISQALPKSSVRPGAAVGRGSRSSSLQQFVDSGGPVLVQLALGTLANFNFKGHELLEFARESVILYLEDEDCSTRKAAATCCCKLVAHSLSASSSSQFSSNRPNRMGGAKRRRLVEEIVEKLLMAAVADADVGVRSSVFKALYRNPSFDDFLAQADIMTSIFVALNDEEYHVRELAISVAGRLSEKNPAYVLPALRRYLIQLLTYLDQSMDSKCREESARLLGCLIRSCARLILPYIAPIHKALVARLREGTGPNANNALAAGVLATVGELAKVGGFAMRQYLPELMPLVVDALLDGGAVSKREVAVATLGQVIQSTGYVISPYNEYPPLLGLLLKLLNGELEWSTRLEVLKVLGIMGALDPHAHKRNQHKLPGQHREVLRPTMETAQHIVSMEELPTDFWPSFSASEDYYSTVAISSLMRILHDPSLSSYHQMVVGSLIFIFKSMGLGCVPYLPKVLPELFRAVRMCEDGGLKEFITWKLGTLVSIVRQHIRKYLQEILSLVSELWTSSFSLPAPNRTVQGPQASPVLHLVEQLCLALNDEFRMYILHILPSCIQVLGDAERCNDYYYVPDILHTLEVFGGNLDEHMHLVAPVLVRLFKVELVDIRRRAIVTLTKLIPTVQVGTHVSVLVHHLKLVLDGNNDDLRKDAAEALCCLAHALGEDFTIFVSSIHKLLVKHHMRYRKWDEIENRLLRREPLISENLSVQKYTQCPPEVISDPLDDFGGVPSEEADETQRQPRSHQVNDVRLRSAGEASQRSTREDWAEWMRHFSIALLKESPSPALRTCARLAQLQPSVGRELFAAGFASCWAQMNETSQEQLVRSLKTAFSSQNIPPEILATLLNLAEFMEHDEKPLPIDTRLLGALAEKCRAFAKALHYKEMEFEAVCSKKMGANPVTVVESLIHINNQLHQHEAAIGILTYSQQHLEVQLKESWYEKLHRWDEALKAYKAKSSQASGPLQNLDATLGRMRCLAALARWEDLSALCREQWTGSEPSARLEMAPMAANAAWHMGEWDHMAEYVSRLDDGDENKLRILGNTTASGDGSSNGAFFRAVLSVRCKKYEEARVYVERARRCLATELAALVLESYERAYNNMVRVQQLSELEEVIDYCTLPMESPIADSRRELIRNMWNERIKGTKRNVEVWQALLAVRELVLPPNEDRDTWIKFAKLCWKSGRISQAKSTLVKLLQFDPESSPELTLYHGHPQVVLAYLKYQYAVGDELKRRDAFCRLQDLSVQLATATNSYSGTLASQVATSNAGVPLIARVYLTLASWKRALSPGLDDDSIQEILVSYKNATLNAKDWGKAWHLWALFNTEVMSRYTLRGRPDIAGKYVVAAVTGYFYSIACASTTKGVDDSLQDILRLLTLWFNHGATSEVQMALQKGFSLVNIEMWLVVLPQIIARIHSNNKIVRELIQSLLVRIGKDHPQALMYPLLVACKSISILRQRAAQEVVDKIRQHSGGLVDQAQLVSKELIRVAILWHEMWHEALEEASRMYFGEHNIEGMLAVLEPLHAMLERGPETIKENTFIQAYGHELLEAHECCLKYRATGEDAELTKAWDLYYHVFRRIDKQLPSLTTLDLHSVSPELLECRKLELAVPGTYSADAPLVTIEYFVPQLIVITSKQRPRKLTIHGSDGNDYAFLLKGHEDLRQDERVMQLFGLVNTLLENSRKTSEKDLSIQRYAVIPLSPNSGLIGWVPNCDTLHALIREYRDARKIFLNQEHRCMLSFAPDYDHLPLIAKVEVFQHALENSEGNDLAKVLWLKSRTSEVWLERRTNYTRSLAVMSMVGYLLGLGDRHPSNLMLDRYSGKILHIDFGDCFEASMNREKFPEKVPFRLTRMLVKAMEVSGIEGTFRTTCENVMQVLRTNKDSVMAMMEAFVHDPLINWRLFNFNEVPQVTNYGNAHSHTVVNSEEAANRELMQPPRGARERELLQAVNQLGDANEVLNERAVAVMARMSHKLTGRDFSSGSSLSGAGSSTQHGNEHLASGDTREVEPGLSVKVQVQRLILQATSHENLCQNYVGWCPFW</sequence>
<dbReference type="EC" id="2.7.11.1" evidence="9"/>
<dbReference type="EMBL" id="AB982929">
    <property type="protein sequence ID" value="BAP28447.1"/>
    <property type="molecule type" value="mRNA"/>
</dbReference>
<dbReference type="EMBL" id="AC136223">
    <property type="protein sequence ID" value="AAT93990.1"/>
    <property type="status" value="ALT_SEQ"/>
    <property type="molecule type" value="Genomic_DNA"/>
</dbReference>
<dbReference type="EMBL" id="AP008211">
    <property type="protein sequence ID" value="BAF16902.2"/>
    <property type="status" value="ALT_SEQ"/>
    <property type="molecule type" value="Genomic_DNA"/>
</dbReference>
<dbReference type="EMBL" id="AP014961">
    <property type="protein sequence ID" value="BAS92935.1"/>
    <property type="status" value="ALT_SEQ"/>
    <property type="molecule type" value="Genomic_DNA"/>
</dbReference>
<dbReference type="EMBL" id="AK120473">
    <property type="protein sequence ID" value="BAH00032.1"/>
    <property type="status" value="ALT_INIT"/>
    <property type="molecule type" value="mRNA"/>
</dbReference>
<dbReference type="RefSeq" id="XP_015639567.1">
    <property type="nucleotide sequence ID" value="XM_015784081.1"/>
</dbReference>
<dbReference type="SMR" id="Q0DJS1"/>
<dbReference type="FunCoup" id="Q0DJS1">
    <property type="interactions" value="3015"/>
</dbReference>
<dbReference type="STRING" id="39947.Q0DJS1"/>
<dbReference type="PaxDb" id="39947-Q0DJS1"/>
<dbReference type="EnsemblPlants" id="Os05t0235300-01">
    <property type="protein sequence ID" value="Os05t0235300-01"/>
    <property type="gene ID" value="Os05g0235300"/>
</dbReference>
<dbReference type="Gramene" id="Os05t0235300-01">
    <property type="protein sequence ID" value="Os05t0235300-01"/>
    <property type="gene ID" value="Os05g0235300"/>
</dbReference>
<dbReference type="KEGG" id="dosa:Os05g0235300"/>
<dbReference type="eggNOG" id="KOG0891">
    <property type="taxonomic scope" value="Eukaryota"/>
</dbReference>
<dbReference type="HOGENOM" id="CLU_000178_7_1_1"/>
<dbReference type="InParanoid" id="Q0DJS1"/>
<dbReference type="OrthoDB" id="381190at2759"/>
<dbReference type="Proteomes" id="UP000000763">
    <property type="component" value="Chromosome 5"/>
</dbReference>
<dbReference type="Proteomes" id="UP000059680">
    <property type="component" value="Chromosome 5"/>
</dbReference>
<dbReference type="GO" id="GO:0005737">
    <property type="term" value="C:cytoplasm"/>
    <property type="evidence" value="ECO:0000318"/>
    <property type="project" value="GO_Central"/>
</dbReference>
<dbReference type="GO" id="GO:0005634">
    <property type="term" value="C:nucleus"/>
    <property type="evidence" value="ECO:0000318"/>
    <property type="project" value="GO_Central"/>
</dbReference>
<dbReference type="GO" id="GO:0038201">
    <property type="term" value="C:TOR complex"/>
    <property type="evidence" value="ECO:0000318"/>
    <property type="project" value="GO_Central"/>
</dbReference>
<dbReference type="GO" id="GO:0005524">
    <property type="term" value="F:ATP binding"/>
    <property type="evidence" value="ECO:0007669"/>
    <property type="project" value="UniProtKB-KW"/>
</dbReference>
<dbReference type="GO" id="GO:0106310">
    <property type="term" value="F:protein serine kinase activity"/>
    <property type="evidence" value="ECO:0007669"/>
    <property type="project" value="RHEA"/>
</dbReference>
<dbReference type="GO" id="GO:0004674">
    <property type="term" value="F:protein serine/threonine kinase activity"/>
    <property type="evidence" value="ECO:0000318"/>
    <property type="project" value="GO_Central"/>
</dbReference>
<dbReference type="GO" id="GO:0044877">
    <property type="term" value="F:protein-containing complex binding"/>
    <property type="evidence" value="ECO:0007669"/>
    <property type="project" value="InterPro"/>
</dbReference>
<dbReference type="GO" id="GO:0016242">
    <property type="term" value="P:negative regulation of macroautophagy"/>
    <property type="evidence" value="ECO:0000318"/>
    <property type="project" value="GO_Central"/>
</dbReference>
<dbReference type="GO" id="GO:0031929">
    <property type="term" value="P:TOR signaling"/>
    <property type="evidence" value="ECO:0000318"/>
    <property type="project" value="GO_Central"/>
</dbReference>
<dbReference type="CDD" id="cd05169">
    <property type="entry name" value="PIKKc_TOR"/>
    <property type="match status" value="1"/>
</dbReference>
<dbReference type="FunFam" id="1.10.1070.11:FF:000017">
    <property type="entry name" value="Serine/threonine-protein kinase TOR"/>
    <property type="match status" value="1"/>
</dbReference>
<dbReference type="FunFam" id="1.20.120.150:FF:000001">
    <property type="entry name" value="Serine/threonine-protein kinase TOR"/>
    <property type="match status" value="1"/>
</dbReference>
<dbReference type="FunFam" id="1.25.10.10:FF:000284">
    <property type="entry name" value="Serine/threonine-protein kinase TOR"/>
    <property type="match status" value="1"/>
</dbReference>
<dbReference type="FunFam" id="1.25.10.10:FF:000694">
    <property type="entry name" value="Serine/threonine-protein kinase TOR"/>
    <property type="match status" value="1"/>
</dbReference>
<dbReference type="FunFam" id="1.25.10.10:FF:000699">
    <property type="entry name" value="Serine/threonine-protein kinase TOR"/>
    <property type="match status" value="1"/>
</dbReference>
<dbReference type="FunFam" id="1.25.10.10:FF:000700">
    <property type="entry name" value="Serine/threonine-protein kinase TOR"/>
    <property type="match status" value="1"/>
</dbReference>
<dbReference type="FunFam" id="3.30.1010.10:FF:000006">
    <property type="entry name" value="Serine/threonine-protein kinase TOR"/>
    <property type="match status" value="1"/>
</dbReference>
<dbReference type="Gene3D" id="1.20.120.150">
    <property type="entry name" value="FKBP12-rapamycin binding domain"/>
    <property type="match status" value="1"/>
</dbReference>
<dbReference type="Gene3D" id="1.25.10.10">
    <property type="entry name" value="Leucine-rich Repeat Variant"/>
    <property type="match status" value="4"/>
</dbReference>
<dbReference type="Gene3D" id="1.10.1070.11">
    <property type="entry name" value="Phosphatidylinositol 3-/4-kinase, catalytic domain"/>
    <property type="match status" value="1"/>
</dbReference>
<dbReference type="Gene3D" id="3.30.1010.10">
    <property type="entry name" value="Phosphatidylinositol 3-kinase Catalytic Subunit, Chain A, domain 4"/>
    <property type="match status" value="1"/>
</dbReference>
<dbReference type="InterPro" id="IPR011989">
    <property type="entry name" value="ARM-like"/>
</dbReference>
<dbReference type="InterPro" id="IPR016024">
    <property type="entry name" value="ARM-type_fold"/>
</dbReference>
<dbReference type="InterPro" id="IPR050517">
    <property type="entry name" value="DDR_Repair_Kinase"/>
</dbReference>
<dbReference type="InterPro" id="IPR003152">
    <property type="entry name" value="FATC_dom"/>
</dbReference>
<dbReference type="InterPro" id="IPR009076">
    <property type="entry name" value="FRB_dom"/>
</dbReference>
<dbReference type="InterPro" id="IPR036738">
    <property type="entry name" value="FRB_sf"/>
</dbReference>
<dbReference type="InterPro" id="IPR011009">
    <property type="entry name" value="Kinase-like_dom_sf"/>
</dbReference>
<dbReference type="InterPro" id="IPR024585">
    <property type="entry name" value="mTOR_dom"/>
</dbReference>
<dbReference type="InterPro" id="IPR000403">
    <property type="entry name" value="PI3/4_kinase_cat_dom"/>
</dbReference>
<dbReference type="InterPro" id="IPR036940">
    <property type="entry name" value="PI3/4_kinase_cat_sf"/>
</dbReference>
<dbReference type="InterPro" id="IPR018936">
    <property type="entry name" value="PI3/4_kinase_CS"/>
</dbReference>
<dbReference type="InterPro" id="IPR003151">
    <property type="entry name" value="PIK-rel_kinase_FAT"/>
</dbReference>
<dbReference type="InterPro" id="IPR014009">
    <property type="entry name" value="PIK_FAT"/>
</dbReference>
<dbReference type="InterPro" id="IPR026683">
    <property type="entry name" value="TOR_cat"/>
</dbReference>
<dbReference type="PANTHER" id="PTHR11139">
    <property type="entry name" value="ATAXIA TELANGIECTASIA MUTATED ATM -RELATED"/>
    <property type="match status" value="1"/>
</dbReference>
<dbReference type="PANTHER" id="PTHR11139:SF9">
    <property type="entry name" value="SERINE_THREONINE-PROTEIN KINASE MTOR"/>
    <property type="match status" value="1"/>
</dbReference>
<dbReference type="Pfam" id="PF02259">
    <property type="entry name" value="FAT"/>
    <property type="match status" value="1"/>
</dbReference>
<dbReference type="Pfam" id="PF02260">
    <property type="entry name" value="FATC"/>
    <property type="match status" value="1"/>
</dbReference>
<dbReference type="Pfam" id="PF08771">
    <property type="entry name" value="FRB_dom"/>
    <property type="match status" value="1"/>
</dbReference>
<dbReference type="Pfam" id="PF23593">
    <property type="entry name" value="HEAT_ATR"/>
    <property type="match status" value="1"/>
</dbReference>
<dbReference type="Pfam" id="PF11865">
    <property type="entry name" value="mTOR_dom"/>
    <property type="match status" value="1"/>
</dbReference>
<dbReference type="Pfam" id="PF00454">
    <property type="entry name" value="PI3_PI4_kinase"/>
    <property type="match status" value="1"/>
</dbReference>
<dbReference type="SMART" id="SM01346">
    <property type="entry name" value="DUF3385"/>
    <property type="match status" value="1"/>
</dbReference>
<dbReference type="SMART" id="SM01343">
    <property type="entry name" value="FATC"/>
    <property type="match status" value="1"/>
</dbReference>
<dbReference type="SMART" id="SM00146">
    <property type="entry name" value="PI3Kc"/>
    <property type="match status" value="1"/>
</dbReference>
<dbReference type="SMART" id="SM01345">
    <property type="entry name" value="Rapamycin_bind"/>
    <property type="match status" value="1"/>
</dbReference>
<dbReference type="SUPFAM" id="SSF48371">
    <property type="entry name" value="ARM repeat"/>
    <property type="match status" value="2"/>
</dbReference>
<dbReference type="SUPFAM" id="SSF47212">
    <property type="entry name" value="FKBP12-rapamycin-binding domain of FKBP-rapamycin-associated protein (FRAP)"/>
    <property type="match status" value="1"/>
</dbReference>
<dbReference type="SUPFAM" id="SSF56112">
    <property type="entry name" value="Protein kinase-like (PK-like)"/>
    <property type="match status" value="1"/>
</dbReference>
<dbReference type="PROSITE" id="PS51189">
    <property type="entry name" value="FAT"/>
    <property type="match status" value="1"/>
</dbReference>
<dbReference type="PROSITE" id="PS51190">
    <property type="entry name" value="FATC"/>
    <property type="match status" value="1"/>
</dbReference>
<dbReference type="PROSITE" id="PS00915">
    <property type="entry name" value="PI3_4_KINASE_1"/>
    <property type="match status" value="1"/>
</dbReference>
<dbReference type="PROSITE" id="PS00916">
    <property type="entry name" value="PI3_4_KINASE_2"/>
    <property type="match status" value="1"/>
</dbReference>
<dbReference type="PROSITE" id="PS50290">
    <property type="entry name" value="PI3_4_KINASE_3"/>
    <property type="match status" value="1"/>
</dbReference>
<organism>
    <name type="scientific">Oryza sativa subsp. japonica</name>
    <name type="common">Rice</name>
    <dbReference type="NCBI Taxonomy" id="39947"/>
    <lineage>
        <taxon>Eukaryota</taxon>
        <taxon>Viridiplantae</taxon>
        <taxon>Streptophyta</taxon>
        <taxon>Embryophyta</taxon>
        <taxon>Tracheophyta</taxon>
        <taxon>Spermatophyta</taxon>
        <taxon>Magnoliopsida</taxon>
        <taxon>Liliopsida</taxon>
        <taxon>Poales</taxon>
        <taxon>Poaceae</taxon>
        <taxon>BOP clade</taxon>
        <taxon>Oryzoideae</taxon>
        <taxon>Oryzeae</taxon>
        <taxon>Oryzinae</taxon>
        <taxon>Oryza</taxon>
        <taxon>Oryza sativa</taxon>
    </lineage>
</organism>